<keyword id="KW-1185">Reference proteome</keyword>
<keyword id="KW-0687">Ribonucleoprotein</keyword>
<keyword id="KW-0689">Ribosomal protein</keyword>
<comment type="function">
    <text evidence="1">This protein is one of the early assembly proteins of the 50S ribosomal subunit, although it is not seen to bind rRNA by itself. It is important during the early stages of 50S assembly.</text>
</comment>
<comment type="subunit">
    <text evidence="1">Part of the 50S ribosomal subunit.</text>
</comment>
<comment type="similarity">
    <text evidence="1">Belongs to the universal ribosomal protein uL13 family.</text>
</comment>
<name>RL13_CUPMC</name>
<evidence type="ECO:0000255" key="1">
    <source>
        <dbReference type="HAMAP-Rule" id="MF_01366"/>
    </source>
</evidence>
<evidence type="ECO:0000305" key="2"/>
<dbReference type="EMBL" id="CP000352">
    <property type="protein sequence ID" value="ABF07296.1"/>
    <property type="molecule type" value="Genomic_DNA"/>
</dbReference>
<dbReference type="RefSeq" id="WP_008646003.1">
    <property type="nucleotide sequence ID" value="NC_007973.1"/>
</dbReference>
<dbReference type="SMR" id="Q1LRD0"/>
<dbReference type="STRING" id="266264.Rmet_0410"/>
<dbReference type="GeneID" id="60824012"/>
<dbReference type="KEGG" id="rme:Rmet_0410"/>
<dbReference type="eggNOG" id="COG0102">
    <property type="taxonomic scope" value="Bacteria"/>
</dbReference>
<dbReference type="HOGENOM" id="CLU_082184_2_2_4"/>
<dbReference type="Proteomes" id="UP000002429">
    <property type="component" value="Chromosome"/>
</dbReference>
<dbReference type="GO" id="GO:0022625">
    <property type="term" value="C:cytosolic large ribosomal subunit"/>
    <property type="evidence" value="ECO:0007669"/>
    <property type="project" value="TreeGrafter"/>
</dbReference>
<dbReference type="GO" id="GO:0003729">
    <property type="term" value="F:mRNA binding"/>
    <property type="evidence" value="ECO:0007669"/>
    <property type="project" value="TreeGrafter"/>
</dbReference>
<dbReference type="GO" id="GO:0003735">
    <property type="term" value="F:structural constituent of ribosome"/>
    <property type="evidence" value="ECO:0007669"/>
    <property type="project" value="InterPro"/>
</dbReference>
<dbReference type="GO" id="GO:0017148">
    <property type="term" value="P:negative regulation of translation"/>
    <property type="evidence" value="ECO:0007669"/>
    <property type="project" value="TreeGrafter"/>
</dbReference>
<dbReference type="GO" id="GO:0006412">
    <property type="term" value="P:translation"/>
    <property type="evidence" value="ECO:0007669"/>
    <property type="project" value="UniProtKB-UniRule"/>
</dbReference>
<dbReference type="CDD" id="cd00392">
    <property type="entry name" value="Ribosomal_L13"/>
    <property type="match status" value="1"/>
</dbReference>
<dbReference type="FunFam" id="3.90.1180.10:FF:000001">
    <property type="entry name" value="50S ribosomal protein L13"/>
    <property type="match status" value="1"/>
</dbReference>
<dbReference type="Gene3D" id="3.90.1180.10">
    <property type="entry name" value="Ribosomal protein L13"/>
    <property type="match status" value="1"/>
</dbReference>
<dbReference type="HAMAP" id="MF_01366">
    <property type="entry name" value="Ribosomal_uL13"/>
    <property type="match status" value="1"/>
</dbReference>
<dbReference type="InterPro" id="IPR005822">
    <property type="entry name" value="Ribosomal_uL13"/>
</dbReference>
<dbReference type="InterPro" id="IPR005823">
    <property type="entry name" value="Ribosomal_uL13_bac-type"/>
</dbReference>
<dbReference type="InterPro" id="IPR036899">
    <property type="entry name" value="Ribosomal_uL13_sf"/>
</dbReference>
<dbReference type="NCBIfam" id="TIGR01066">
    <property type="entry name" value="rplM_bact"/>
    <property type="match status" value="1"/>
</dbReference>
<dbReference type="PANTHER" id="PTHR11545:SF2">
    <property type="entry name" value="LARGE RIBOSOMAL SUBUNIT PROTEIN UL13M"/>
    <property type="match status" value="1"/>
</dbReference>
<dbReference type="PANTHER" id="PTHR11545">
    <property type="entry name" value="RIBOSOMAL PROTEIN L13"/>
    <property type="match status" value="1"/>
</dbReference>
<dbReference type="Pfam" id="PF00572">
    <property type="entry name" value="Ribosomal_L13"/>
    <property type="match status" value="1"/>
</dbReference>
<dbReference type="PIRSF" id="PIRSF002181">
    <property type="entry name" value="Ribosomal_L13"/>
    <property type="match status" value="1"/>
</dbReference>
<dbReference type="SUPFAM" id="SSF52161">
    <property type="entry name" value="Ribosomal protein L13"/>
    <property type="match status" value="1"/>
</dbReference>
<proteinExistence type="inferred from homology"/>
<protein>
    <recommendedName>
        <fullName evidence="1">Large ribosomal subunit protein uL13</fullName>
    </recommendedName>
    <alternativeName>
        <fullName evidence="2">50S ribosomal protein L13</fullName>
    </alternativeName>
</protein>
<organism>
    <name type="scientific">Cupriavidus metallidurans (strain ATCC 43123 / DSM 2839 / NBRC 102507 / CH34)</name>
    <name type="common">Ralstonia metallidurans</name>
    <dbReference type="NCBI Taxonomy" id="266264"/>
    <lineage>
        <taxon>Bacteria</taxon>
        <taxon>Pseudomonadati</taxon>
        <taxon>Pseudomonadota</taxon>
        <taxon>Betaproteobacteria</taxon>
        <taxon>Burkholderiales</taxon>
        <taxon>Burkholderiaceae</taxon>
        <taxon>Cupriavidus</taxon>
    </lineage>
</organism>
<reference key="1">
    <citation type="journal article" date="2010" name="PLoS ONE">
        <title>The complete genome sequence of Cupriavidus metallidurans strain CH34, a master survivalist in harsh and anthropogenic environments.</title>
        <authorList>
            <person name="Janssen P.J."/>
            <person name="Van Houdt R."/>
            <person name="Moors H."/>
            <person name="Monsieurs P."/>
            <person name="Morin N."/>
            <person name="Michaux A."/>
            <person name="Benotmane M.A."/>
            <person name="Leys N."/>
            <person name="Vallaeys T."/>
            <person name="Lapidus A."/>
            <person name="Monchy S."/>
            <person name="Medigue C."/>
            <person name="Taghavi S."/>
            <person name="McCorkle S."/>
            <person name="Dunn J."/>
            <person name="van der Lelie D."/>
            <person name="Mergeay M."/>
        </authorList>
    </citation>
    <scope>NUCLEOTIDE SEQUENCE [LARGE SCALE GENOMIC DNA]</scope>
    <source>
        <strain>ATCC 43123 / DSM 2839 / NBRC 102507 / CH34</strain>
    </source>
</reference>
<gene>
    <name evidence="1" type="primary">rplM</name>
    <name type="ordered locus">Rmet_0410</name>
</gene>
<feature type="chain" id="PRO_0000261779" description="Large ribosomal subunit protein uL13">
    <location>
        <begin position="1"/>
        <end position="142"/>
    </location>
</feature>
<sequence length="142" mass="16041">MKTFSAKPAEVKRDWYVIDATDKVLGRVASEVARRLRGKHKPEFTPHVDTGDFIIIVNAAKLRVTGTKEQDKKYYRHSGYPGGIYETTFGKMQQRFPGRALEKAVKGMLPKGPLGYAMIKKLKVYAEAEHPHSAQQPKVLEI</sequence>
<accession>Q1LRD0</accession>